<dbReference type="EMBL" id="CP001011">
    <property type="protein sequence ID" value="ACB93417.1"/>
    <property type="molecule type" value="Genomic_DNA"/>
</dbReference>
<dbReference type="RefSeq" id="WP_004090402.1">
    <property type="nucleotide sequence ID" value="NC_010577.1"/>
</dbReference>
<dbReference type="SMR" id="B2I9P6"/>
<dbReference type="GeneID" id="93905774"/>
<dbReference type="KEGG" id="xfn:XfasM23_2018"/>
<dbReference type="HOGENOM" id="CLU_169643_4_3_6"/>
<dbReference type="Proteomes" id="UP000001698">
    <property type="component" value="Chromosome"/>
</dbReference>
<dbReference type="GO" id="GO:0022625">
    <property type="term" value="C:cytosolic large ribosomal subunit"/>
    <property type="evidence" value="ECO:0007669"/>
    <property type="project" value="TreeGrafter"/>
</dbReference>
<dbReference type="GO" id="GO:0003735">
    <property type="term" value="F:structural constituent of ribosome"/>
    <property type="evidence" value="ECO:0007669"/>
    <property type="project" value="InterPro"/>
</dbReference>
<dbReference type="GO" id="GO:0006412">
    <property type="term" value="P:translation"/>
    <property type="evidence" value="ECO:0007669"/>
    <property type="project" value="UniProtKB-UniRule"/>
</dbReference>
<dbReference type="FunFam" id="4.10.410.60:FF:000001">
    <property type="entry name" value="50S ribosomal protein L35"/>
    <property type="match status" value="1"/>
</dbReference>
<dbReference type="Gene3D" id="4.10.410.60">
    <property type="match status" value="1"/>
</dbReference>
<dbReference type="HAMAP" id="MF_00514">
    <property type="entry name" value="Ribosomal_bL35"/>
    <property type="match status" value="1"/>
</dbReference>
<dbReference type="InterPro" id="IPR001706">
    <property type="entry name" value="Ribosomal_bL35"/>
</dbReference>
<dbReference type="InterPro" id="IPR021137">
    <property type="entry name" value="Ribosomal_bL35-like"/>
</dbReference>
<dbReference type="InterPro" id="IPR018265">
    <property type="entry name" value="Ribosomal_bL35_CS"/>
</dbReference>
<dbReference type="InterPro" id="IPR037229">
    <property type="entry name" value="Ribosomal_bL35_sf"/>
</dbReference>
<dbReference type="NCBIfam" id="TIGR00001">
    <property type="entry name" value="rpmI_bact"/>
    <property type="match status" value="1"/>
</dbReference>
<dbReference type="PANTHER" id="PTHR33343">
    <property type="entry name" value="54S RIBOSOMAL PROTEIN BL35M"/>
    <property type="match status" value="1"/>
</dbReference>
<dbReference type="PANTHER" id="PTHR33343:SF1">
    <property type="entry name" value="LARGE RIBOSOMAL SUBUNIT PROTEIN BL35M"/>
    <property type="match status" value="1"/>
</dbReference>
<dbReference type="Pfam" id="PF01632">
    <property type="entry name" value="Ribosomal_L35p"/>
    <property type="match status" value="1"/>
</dbReference>
<dbReference type="PRINTS" id="PR00064">
    <property type="entry name" value="RIBOSOMALL35"/>
</dbReference>
<dbReference type="SUPFAM" id="SSF143034">
    <property type="entry name" value="L35p-like"/>
    <property type="match status" value="1"/>
</dbReference>
<dbReference type="PROSITE" id="PS00936">
    <property type="entry name" value="RIBOSOMAL_L35"/>
    <property type="match status" value="1"/>
</dbReference>
<protein>
    <recommendedName>
        <fullName evidence="1">Large ribosomal subunit protein bL35</fullName>
    </recommendedName>
    <alternativeName>
        <fullName evidence="3">50S ribosomal protein L35</fullName>
    </alternativeName>
</protein>
<reference key="1">
    <citation type="journal article" date="2010" name="J. Bacteriol.">
        <title>Whole genome sequences of two Xylella fastidiosa strains (M12 and M23) causing almond leaf scorch disease in California.</title>
        <authorList>
            <person name="Chen J."/>
            <person name="Xie G."/>
            <person name="Han S."/>
            <person name="Chertkov O."/>
            <person name="Sims D."/>
            <person name="Civerolo E.L."/>
        </authorList>
    </citation>
    <scope>NUCLEOTIDE SEQUENCE [LARGE SCALE GENOMIC DNA]</scope>
    <source>
        <strain>M23</strain>
    </source>
</reference>
<proteinExistence type="inferred from homology"/>
<sequence length="65" mass="7556">MPKIKTNRAAAKRFRKTASGKYKAGHANRSHILTKKATKRKRNLRQQNHVRAEDAGRLDRMLPYL</sequence>
<name>RL35_XYLF2</name>
<accession>B2I9P6</accession>
<gene>
    <name evidence="1" type="primary">rpmI</name>
    <name type="ordered locus">XfasM23_2018</name>
</gene>
<feature type="chain" id="PRO_1000127429" description="Large ribosomal subunit protein bL35">
    <location>
        <begin position="1"/>
        <end position="65"/>
    </location>
</feature>
<feature type="region of interest" description="Disordered" evidence="2">
    <location>
        <begin position="1"/>
        <end position="65"/>
    </location>
</feature>
<feature type="compositionally biased region" description="Basic residues" evidence="2">
    <location>
        <begin position="10"/>
        <end position="44"/>
    </location>
</feature>
<feature type="compositionally biased region" description="Basic and acidic residues" evidence="2">
    <location>
        <begin position="50"/>
        <end position="65"/>
    </location>
</feature>
<comment type="similarity">
    <text evidence="1">Belongs to the bacterial ribosomal protein bL35 family.</text>
</comment>
<keyword id="KW-0687">Ribonucleoprotein</keyword>
<keyword id="KW-0689">Ribosomal protein</keyword>
<organism>
    <name type="scientific">Xylella fastidiosa (strain M23)</name>
    <dbReference type="NCBI Taxonomy" id="405441"/>
    <lineage>
        <taxon>Bacteria</taxon>
        <taxon>Pseudomonadati</taxon>
        <taxon>Pseudomonadota</taxon>
        <taxon>Gammaproteobacteria</taxon>
        <taxon>Lysobacterales</taxon>
        <taxon>Lysobacteraceae</taxon>
        <taxon>Xylella</taxon>
    </lineage>
</organism>
<evidence type="ECO:0000255" key="1">
    <source>
        <dbReference type="HAMAP-Rule" id="MF_00514"/>
    </source>
</evidence>
<evidence type="ECO:0000256" key="2">
    <source>
        <dbReference type="SAM" id="MobiDB-lite"/>
    </source>
</evidence>
<evidence type="ECO:0000305" key="3"/>